<accession>P0C591</accession>
<feature type="chain" id="PRO_0000295875" description="Dual specificity phosphatase 29">
    <location>
        <begin position="1"/>
        <end position="219"/>
    </location>
</feature>
<feature type="domain" description="Tyrosine-protein phosphatase" evidence="3">
    <location>
        <begin position="53"/>
        <end position="201"/>
    </location>
</feature>
<feature type="active site" description="Phosphocysteine intermediate" evidence="3">
    <location>
        <position position="146"/>
    </location>
</feature>
<feature type="binding site" evidence="1">
    <location>
        <begin position="145"/>
        <end position="152"/>
    </location>
    <ligand>
        <name>substrate</name>
    </ligand>
</feature>
<keyword id="KW-0963">Cytoplasm</keyword>
<keyword id="KW-0378">Hydrolase</keyword>
<keyword id="KW-0539">Nucleus</keyword>
<keyword id="KW-0904">Protein phosphatase</keyword>
<keyword id="KW-1185">Reference proteome</keyword>
<gene>
    <name type="primary">DUSP29</name>
    <name type="synonym">DUPD1</name>
</gene>
<proteinExistence type="evidence at transcript level"/>
<dbReference type="EC" id="3.1.3.16" evidence="1"/>
<dbReference type="EC" id="3.1.3.48" evidence="1"/>
<dbReference type="EMBL" id="BF074326">
    <property type="status" value="NOT_ANNOTATED_CDS"/>
    <property type="molecule type" value="mRNA"/>
</dbReference>
<dbReference type="EMBL" id="CK773828">
    <property type="status" value="NOT_ANNOTATED_CDS"/>
    <property type="molecule type" value="mRNA"/>
</dbReference>
<dbReference type="RefSeq" id="XP_005226533.1">
    <property type="nucleotide sequence ID" value="XM_005226476.5"/>
</dbReference>
<dbReference type="SMR" id="P0C591"/>
<dbReference type="FunCoup" id="P0C591">
    <property type="interactions" value="91"/>
</dbReference>
<dbReference type="STRING" id="9913.ENSBTAP00000003800"/>
<dbReference type="PaxDb" id="9913-ENSBTAP00000003800"/>
<dbReference type="Ensembl" id="ENSBTAT00000003800.6">
    <property type="protein sequence ID" value="ENSBTAP00000003800.4"/>
    <property type="gene ID" value="ENSBTAG00000002924.6"/>
</dbReference>
<dbReference type="GeneID" id="616082"/>
<dbReference type="CTD" id="338599"/>
<dbReference type="VEuPathDB" id="HostDB:ENSBTAG00000002924"/>
<dbReference type="VGNC" id="VGNC:28245">
    <property type="gene designation" value="DUSP29"/>
</dbReference>
<dbReference type="eggNOG" id="KOG1716">
    <property type="taxonomic scope" value="Eukaryota"/>
</dbReference>
<dbReference type="GeneTree" id="ENSGT00940000160190"/>
<dbReference type="HOGENOM" id="CLU_027074_11_3_1"/>
<dbReference type="InParanoid" id="P0C591"/>
<dbReference type="OMA" id="NAAHGQR"/>
<dbReference type="OrthoDB" id="10252009at2759"/>
<dbReference type="TreeFam" id="TF105128"/>
<dbReference type="Proteomes" id="UP000009136">
    <property type="component" value="Chromosome 28"/>
</dbReference>
<dbReference type="Bgee" id="ENSBTAG00000002924">
    <property type="expression patterns" value="Expressed in biceps femoris and 31 other cell types or tissues"/>
</dbReference>
<dbReference type="GO" id="GO:0005737">
    <property type="term" value="C:cytoplasm"/>
    <property type="evidence" value="ECO:0000250"/>
    <property type="project" value="UniProtKB"/>
</dbReference>
<dbReference type="GO" id="GO:0005634">
    <property type="term" value="C:nucleus"/>
    <property type="evidence" value="ECO:0000250"/>
    <property type="project" value="UniProtKB"/>
</dbReference>
<dbReference type="GO" id="GO:0032991">
    <property type="term" value="C:protein-containing complex"/>
    <property type="evidence" value="ECO:0007669"/>
    <property type="project" value="Ensembl"/>
</dbReference>
<dbReference type="GO" id="GO:0033549">
    <property type="term" value="F:MAP kinase phosphatase activity"/>
    <property type="evidence" value="ECO:0000250"/>
    <property type="project" value="UniProtKB"/>
</dbReference>
<dbReference type="GO" id="GO:0042803">
    <property type="term" value="F:protein homodimerization activity"/>
    <property type="evidence" value="ECO:0007669"/>
    <property type="project" value="Ensembl"/>
</dbReference>
<dbReference type="GO" id="GO:0004722">
    <property type="term" value="F:protein serine/threonine phosphatase activity"/>
    <property type="evidence" value="ECO:0007669"/>
    <property type="project" value="UniProtKB-EC"/>
</dbReference>
<dbReference type="GO" id="GO:0004725">
    <property type="term" value="F:protein tyrosine phosphatase activity"/>
    <property type="evidence" value="ECO:0007669"/>
    <property type="project" value="UniProtKB-EC"/>
</dbReference>
<dbReference type="GO" id="GO:0008138">
    <property type="term" value="F:protein tyrosine/serine/threonine phosphatase activity"/>
    <property type="evidence" value="ECO:0000250"/>
    <property type="project" value="UniProtKB"/>
</dbReference>
<dbReference type="GO" id="GO:0042593">
    <property type="term" value="P:glucose homeostasis"/>
    <property type="evidence" value="ECO:0007669"/>
    <property type="project" value="Ensembl"/>
</dbReference>
<dbReference type="GO" id="GO:0042692">
    <property type="term" value="P:muscle cell differentiation"/>
    <property type="evidence" value="ECO:0000250"/>
    <property type="project" value="UniProtKB"/>
</dbReference>
<dbReference type="GO" id="GO:0070373">
    <property type="term" value="P:negative regulation of ERK1 and ERK2 cascade"/>
    <property type="evidence" value="ECO:0000250"/>
    <property type="project" value="UniProtKB"/>
</dbReference>
<dbReference type="GO" id="GO:0043409">
    <property type="term" value="P:negative regulation of MAPK cascade"/>
    <property type="evidence" value="ECO:0000318"/>
    <property type="project" value="GO_Central"/>
</dbReference>
<dbReference type="GO" id="GO:0006470">
    <property type="term" value="P:protein dephosphorylation"/>
    <property type="evidence" value="ECO:0000250"/>
    <property type="project" value="UniProtKB"/>
</dbReference>
<dbReference type="CDD" id="cd14575">
    <property type="entry name" value="DUPD1"/>
    <property type="match status" value="1"/>
</dbReference>
<dbReference type="FunFam" id="3.90.190.10:FF:000037">
    <property type="entry name" value="dual specificity protein phosphatase 26"/>
    <property type="match status" value="1"/>
</dbReference>
<dbReference type="Gene3D" id="3.90.190.10">
    <property type="entry name" value="Protein tyrosine phosphatase superfamily"/>
    <property type="match status" value="1"/>
</dbReference>
<dbReference type="InterPro" id="IPR020405">
    <property type="entry name" value="Atypical_DUSP_subfamA"/>
</dbReference>
<dbReference type="InterPro" id="IPR000340">
    <property type="entry name" value="Dual-sp_phosphatase_cat-dom"/>
</dbReference>
<dbReference type="InterPro" id="IPR029021">
    <property type="entry name" value="Prot-tyrosine_phosphatase-like"/>
</dbReference>
<dbReference type="InterPro" id="IPR016130">
    <property type="entry name" value="Tyr_Pase_AS"/>
</dbReference>
<dbReference type="InterPro" id="IPR000387">
    <property type="entry name" value="Tyr_Pase_dom"/>
</dbReference>
<dbReference type="InterPro" id="IPR020422">
    <property type="entry name" value="TYR_PHOSPHATASE_DUAL_dom"/>
</dbReference>
<dbReference type="PANTHER" id="PTHR45682">
    <property type="entry name" value="AGAP008228-PA"/>
    <property type="match status" value="1"/>
</dbReference>
<dbReference type="PANTHER" id="PTHR45682:SF6">
    <property type="entry name" value="DUAL SPECIFICITY PHOSPHATASE 29"/>
    <property type="match status" value="1"/>
</dbReference>
<dbReference type="Pfam" id="PF00782">
    <property type="entry name" value="DSPc"/>
    <property type="match status" value="1"/>
</dbReference>
<dbReference type="PRINTS" id="PR01908">
    <property type="entry name" value="ADSPHPHTASE"/>
</dbReference>
<dbReference type="PRINTS" id="PR01909">
    <property type="entry name" value="ADSPHPHTASEA"/>
</dbReference>
<dbReference type="SMART" id="SM00195">
    <property type="entry name" value="DSPc"/>
    <property type="match status" value="1"/>
</dbReference>
<dbReference type="SUPFAM" id="SSF52799">
    <property type="entry name" value="(Phosphotyrosine protein) phosphatases II"/>
    <property type="match status" value="1"/>
</dbReference>
<dbReference type="PROSITE" id="PS00383">
    <property type="entry name" value="TYR_PHOSPHATASE_1"/>
    <property type="match status" value="1"/>
</dbReference>
<dbReference type="PROSITE" id="PS50056">
    <property type="entry name" value="TYR_PHOSPHATASE_2"/>
    <property type="match status" value="1"/>
</dbReference>
<dbReference type="PROSITE" id="PS50054">
    <property type="entry name" value="TYR_PHOSPHATASE_DUAL"/>
    <property type="match status" value="1"/>
</dbReference>
<sequence length="219" mass="24984">MTSGESKTGLKNVYPSAKKLLPKVEEGEAEDYCTPGAFELERLFWKGSPQYTHVNEVWPKLYIGDETTALDRYGLQKAGFTHVLNAAHGRWNVDTGPDYYRDMAIEYHGVEADDLPSFDLSVFFYPAAAFIDAALRYDHNKILVHCVMGRSRSATLVLAYLMIHRNMTLVDAIQQVAKNRCVLPNRGFLKQLRELDRQLVQQRRQAQQGEDAEKCEQEP</sequence>
<name>DUS29_BOVIN</name>
<comment type="function">
    <text evidence="1 2">Dual specificity phosphatase able to dephosphorylate phosphotyrosine, phosphoserine and phosphothreonine residues within the same substrate, with a preference for phosphotyrosine as a substrate (By similarity). Involved in the modulation of intracellular signaling cascades. May regulate glucose metabolism by activating, AMPK, an energy sensor protein kinase. Affects MAP kinase signaling though modulation of the ERK1/2 cascade in skeletal muscle promoting muscle cell differentiation, development and atrophy (By similarity).</text>
</comment>
<comment type="catalytic activity">
    <reaction evidence="1">
        <text>O-phospho-L-tyrosyl-[protein] + H2O = L-tyrosyl-[protein] + phosphate</text>
        <dbReference type="Rhea" id="RHEA:10684"/>
        <dbReference type="Rhea" id="RHEA-COMP:10136"/>
        <dbReference type="Rhea" id="RHEA-COMP:20101"/>
        <dbReference type="ChEBI" id="CHEBI:15377"/>
        <dbReference type="ChEBI" id="CHEBI:43474"/>
        <dbReference type="ChEBI" id="CHEBI:46858"/>
        <dbReference type="ChEBI" id="CHEBI:61978"/>
        <dbReference type="EC" id="3.1.3.48"/>
    </reaction>
</comment>
<comment type="catalytic activity">
    <reaction evidence="1">
        <text>O-phospho-L-seryl-[protein] + H2O = L-seryl-[protein] + phosphate</text>
        <dbReference type="Rhea" id="RHEA:20629"/>
        <dbReference type="Rhea" id="RHEA-COMP:9863"/>
        <dbReference type="Rhea" id="RHEA-COMP:11604"/>
        <dbReference type="ChEBI" id="CHEBI:15377"/>
        <dbReference type="ChEBI" id="CHEBI:29999"/>
        <dbReference type="ChEBI" id="CHEBI:43474"/>
        <dbReference type="ChEBI" id="CHEBI:83421"/>
        <dbReference type="EC" id="3.1.3.16"/>
    </reaction>
</comment>
<comment type="catalytic activity">
    <reaction evidence="1">
        <text>O-phospho-L-threonyl-[protein] + H2O = L-threonyl-[protein] + phosphate</text>
        <dbReference type="Rhea" id="RHEA:47004"/>
        <dbReference type="Rhea" id="RHEA-COMP:11060"/>
        <dbReference type="Rhea" id="RHEA-COMP:11605"/>
        <dbReference type="ChEBI" id="CHEBI:15377"/>
        <dbReference type="ChEBI" id="CHEBI:30013"/>
        <dbReference type="ChEBI" id="CHEBI:43474"/>
        <dbReference type="ChEBI" id="CHEBI:61977"/>
        <dbReference type="EC" id="3.1.3.16"/>
    </reaction>
</comment>
<comment type="subunit">
    <text evidence="1 2">Homodimer (By similarity). Interacts with PRKAA2 (By similarity).</text>
</comment>
<comment type="subcellular location">
    <subcellularLocation>
        <location evidence="1">Cytoplasm</location>
    </subcellularLocation>
    <subcellularLocation>
        <location evidence="2">Nucleus</location>
    </subcellularLocation>
</comment>
<comment type="similarity">
    <text evidence="4">Belongs to the protein-tyrosine phosphatase family. Non-receptor class dual specificity subfamily.</text>
</comment>
<organism>
    <name type="scientific">Bos taurus</name>
    <name type="common">Bovine</name>
    <dbReference type="NCBI Taxonomy" id="9913"/>
    <lineage>
        <taxon>Eukaryota</taxon>
        <taxon>Metazoa</taxon>
        <taxon>Chordata</taxon>
        <taxon>Craniata</taxon>
        <taxon>Vertebrata</taxon>
        <taxon>Euteleostomi</taxon>
        <taxon>Mammalia</taxon>
        <taxon>Eutheria</taxon>
        <taxon>Laurasiatheria</taxon>
        <taxon>Artiodactyla</taxon>
        <taxon>Ruminantia</taxon>
        <taxon>Pecora</taxon>
        <taxon>Bovidae</taxon>
        <taxon>Bovinae</taxon>
        <taxon>Bos</taxon>
    </lineage>
</organism>
<evidence type="ECO:0000250" key="1">
    <source>
        <dbReference type="UniProtKB" id="Q68J44"/>
    </source>
</evidence>
<evidence type="ECO:0000250" key="2">
    <source>
        <dbReference type="UniProtKB" id="Q8BK84"/>
    </source>
</evidence>
<evidence type="ECO:0000255" key="3">
    <source>
        <dbReference type="PROSITE-ProRule" id="PRU00160"/>
    </source>
</evidence>
<evidence type="ECO:0000305" key="4"/>
<protein>
    <recommendedName>
        <fullName>Dual specificity phosphatase 29</fullName>
    </recommendedName>
    <alternativeName>
        <fullName>Dual specificity phosphatase DUPD1</fullName>
        <ecNumber evidence="1">3.1.3.16</ecNumber>
        <ecNumber evidence="1">3.1.3.48</ecNumber>
    </alternativeName>
</protein>
<reference key="1">
    <citation type="journal article" date="2001" name="Genome Res.">
        <title>Sequence evaluation of four pooled-tissue normalized bovine cDNA libraries and construction of a gene index for cattle.</title>
        <authorList>
            <person name="Smith T.P.L."/>
            <person name="Grosse W.M."/>
            <person name="Freking B.A."/>
            <person name="Roberts A.J."/>
            <person name="Stone R.T."/>
            <person name="Casas E."/>
            <person name="Wray J.E."/>
            <person name="White J."/>
            <person name="Cho J."/>
            <person name="Fahrenkrug S.C."/>
            <person name="Bennett G.L."/>
            <person name="Heaton M.P."/>
            <person name="Laegreid W.W."/>
            <person name="Rohrer G.A."/>
            <person name="Chitko-McKown C.G."/>
            <person name="Pertea G."/>
            <person name="Holt I."/>
            <person name="Karamycheva S."/>
            <person name="Liang F."/>
            <person name="Quackenbush J."/>
            <person name="Keele J.W."/>
        </authorList>
    </citation>
    <scope>NUCLEOTIDE SEQUENCE [MRNA]</scope>
</reference>